<protein>
    <recommendedName>
        <fullName evidence="1">Atlastin-2</fullName>
        <ecNumber evidence="1">3.6.5.-</ecNumber>
    </recommendedName>
</protein>
<keyword id="KW-0175">Coiled coil</keyword>
<keyword id="KW-0256">Endoplasmic reticulum</keyword>
<keyword id="KW-0342">GTP-binding</keyword>
<keyword id="KW-0378">Hydrolase</keyword>
<keyword id="KW-0460">Magnesium</keyword>
<keyword id="KW-0472">Membrane</keyword>
<keyword id="KW-0479">Metal-binding</keyword>
<keyword id="KW-0488">Methylation</keyword>
<keyword id="KW-0547">Nucleotide-binding</keyword>
<keyword id="KW-1185">Reference proteome</keyword>
<keyword id="KW-0812">Transmembrane</keyword>
<keyword id="KW-1133">Transmembrane helix</keyword>
<feature type="chain" id="PRO_0000287106" description="Atlastin-2">
    <location>
        <begin position="1"/>
        <end position="565"/>
    </location>
</feature>
<feature type="topological domain" description="Cytoplasmic" evidence="1">
    <location>
        <begin position="1"/>
        <end position="458"/>
    </location>
</feature>
<feature type="transmembrane region" description="Helical" evidence="3">
    <location>
        <begin position="459"/>
        <end position="479"/>
    </location>
</feature>
<feature type="topological domain" description="Lumenal" evidence="1">
    <location>
        <begin position="480"/>
        <end position="481"/>
    </location>
</feature>
<feature type="transmembrane region" description="Helical" evidence="3">
    <location>
        <begin position="482"/>
        <end position="502"/>
    </location>
</feature>
<feature type="topological domain" description="Cytoplasmic" evidence="1">
    <location>
        <begin position="503"/>
        <end position="565"/>
    </location>
</feature>
<feature type="domain" description="GB1/RHD3-type G" evidence="4">
    <location>
        <begin position="73"/>
        <end position="318"/>
    </location>
</feature>
<feature type="region of interest" description="3HB (three-helix bundle) domain" evidence="2">
    <location>
        <begin position="356"/>
        <end position="447"/>
    </location>
</feature>
<feature type="region of interest" description="Linker" evidence="2">
    <location>
        <begin position="448"/>
        <end position="456"/>
    </location>
</feature>
<feature type="region of interest" description="Autoinhibitory domain" evidence="1">
    <location>
        <begin position="529"/>
        <end position="565"/>
    </location>
</feature>
<feature type="coiled-coil region" evidence="3">
    <location>
        <begin position="238"/>
        <end position="266"/>
    </location>
</feature>
<feature type="binding site" evidence="2">
    <location>
        <position position="86"/>
    </location>
    <ligand>
        <name>GDP</name>
        <dbReference type="ChEBI" id="CHEBI:58189"/>
    </ligand>
</feature>
<feature type="binding site" evidence="2">
    <location>
        <position position="86"/>
    </location>
    <ligand>
        <name>GTP</name>
        <dbReference type="ChEBI" id="CHEBI:37565"/>
    </ligand>
</feature>
<feature type="binding site" evidence="2">
    <location>
        <position position="87"/>
    </location>
    <ligand>
        <name>GDP</name>
        <dbReference type="ChEBI" id="CHEBI:58189"/>
    </ligand>
</feature>
<feature type="binding site" evidence="2">
    <location>
        <position position="87"/>
    </location>
    <ligand>
        <name>GTP</name>
        <dbReference type="ChEBI" id="CHEBI:37565"/>
    </ligand>
</feature>
<feature type="binding site" evidence="2">
    <location>
        <position position="88"/>
    </location>
    <ligand>
        <name>GDP</name>
        <dbReference type="ChEBI" id="CHEBI:58189"/>
    </ligand>
</feature>
<feature type="binding site" evidence="2">
    <location>
        <position position="88"/>
    </location>
    <ligand>
        <name>GTP</name>
        <dbReference type="ChEBI" id="CHEBI:37565"/>
    </ligand>
</feature>
<feature type="binding site" evidence="2">
    <location>
        <position position="89"/>
    </location>
    <ligand>
        <name>GDP</name>
        <dbReference type="ChEBI" id="CHEBI:58189"/>
    </ligand>
</feature>
<feature type="binding site" evidence="2">
    <location>
        <position position="89"/>
    </location>
    <ligand>
        <name>GTP</name>
        <dbReference type="ChEBI" id="CHEBI:37565"/>
    </ligand>
</feature>
<feature type="binding site" evidence="2">
    <location>
        <position position="90"/>
    </location>
    <ligand>
        <name>GDP</name>
        <dbReference type="ChEBI" id="CHEBI:58189"/>
    </ligand>
</feature>
<feature type="binding site" evidence="2">
    <location>
        <position position="90"/>
    </location>
    <ligand>
        <name>GTP</name>
        <dbReference type="ChEBI" id="CHEBI:37565"/>
    </ligand>
</feature>
<feature type="binding site" evidence="2">
    <location>
        <position position="90"/>
    </location>
    <ligand>
        <name>Mg(2+)</name>
        <dbReference type="ChEBI" id="CHEBI:18420"/>
    </ligand>
</feature>
<feature type="binding site" evidence="2">
    <location>
        <position position="91"/>
    </location>
    <ligand>
        <name>GDP</name>
        <dbReference type="ChEBI" id="CHEBI:58189"/>
    </ligand>
</feature>
<feature type="binding site" evidence="2">
    <location>
        <position position="91"/>
    </location>
    <ligand>
        <name>GTP</name>
        <dbReference type="ChEBI" id="CHEBI:37565"/>
    </ligand>
</feature>
<feature type="binding site" evidence="2">
    <location>
        <position position="157"/>
    </location>
    <ligand>
        <name>GDP</name>
        <dbReference type="ChEBI" id="CHEBI:58189"/>
    </ligand>
</feature>
<feature type="binding site" evidence="2">
    <location>
        <position position="226"/>
    </location>
    <ligand>
        <name>GDP</name>
        <dbReference type="ChEBI" id="CHEBI:58189"/>
    </ligand>
</feature>
<feature type="binding site" evidence="2">
    <location>
        <position position="226"/>
    </location>
    <ligand>
        <name>GTP</name>
        <dbReference type="ChEBI" id="CHEBI:37565"/>
    </ligand>
</feature>
<feature type="binding site" evidence="2">
    <location>
        <position position="227"/>
    </location>
    <ligand>
        <name>GDP</name>
        <dbReference type="ChEBI" id="CHEBI:58189"/>
    </ligand>
</feature>
<feature type="binding site" evidence="2">
    <location>
        <position position="227"/>
    </location>
    <ligand>
        <name>GTP</name>
        <dbReference type="ChEBI" id="CHEBI:37565"/>
    </ligand>
</feature>
<feature type="binding site" evidence="2">
    <location>
        <position position="285"/>
    </location>
    <ligand>
        <name>GDP</name>
        <dbReference type="ChEBI" id="CHEBI:58189"/>
    </ligand>
</feature>
<feature type="binding site" evidence="2">
    <location>
        <position position="285"/>
    </location>
    <ligand>
        <name>GTP</name>
        <dbReference type="ChEBI" id="CHEBI:37565"/>
    </ligand>
</feature>
<feature type="binding site" evidence="2">
    <location>
        <position position="288"/>
    </location>
    <ligand>
        <name>GDP</name>
        <dbReference type="ChEBI" id="CHEBI:58189"/>
    </ligand>
</feature>
<feature type="modified residue" description="N6-methyllysine" evidence="1">
    <location>
        <position position="252"/>
    </location>
</feature>
<accession>Q95LN3</accession>
<name>ATLA2_MACFA</name>
<dbReference type="EC" id="3.6.5.-" evidence="1"/>
<dbReference type="EMBL" id="AB072755">
    <property type="protein sequence ID" value="BAB69724.1"/>
    <property type="molecule type" value="mRNA"/>
</dbReference>
<dbReference type="RefSeq" id="NP_001274612.1">
    <property type="nucleotide sequence ID" value="NM_001287683.1"/>
</dbReference>
<dbReference type="RefSeq" id="XP_045225417.1">
    <property type="nucleotide sequence ID" value="XM_045369482.2"/>
</dbReference>
<dbReference type="SMR" id="Q95LN3"/>
<dbReference type="STRING" id="9541.ENSMFAP00000037319"/>
<dbReference type="Ensembl" id="ENSMFAT00000011612.2">
    <property type="protein sequence ID" value="ENSMFAP00000037362.1"/>
    <property type="gene ID" value="ENSMFAG00000037890.2"/>
</dbReference>
<dbReference type="GeneID" id="102144447"/>
<dbReference type="VEuPathDB" id="HostDB:ENSMFAG00000037890"/>
<dbReference type="eggNOG" id="KOG2037">
    <property type="taxonomic scope" value="Eukaryota"/>
</dbReference>
<dbReference type="GeneTree" id="ENSGT00940000155710"/>
<dbReference type="Proteomes" id="UP000233100">
    <property type="component" value="Chromosome 13"/>
</dbReference>
<dbReference type="Bgee" id="ENSMFAG00000037890">
    <property type="expression patterns" value="Expressed in skeletal muscle tissue and 13 other cell types or tissues"/>
</dbReference>
<dbReference type="GO" id="GO:0098826">
    <property type="term" value="C:endoplasmic reticulum tubular network membrane"/>
    <property type="evidence" value="ECO:0000250"/>
    <property type="project" value="UniProtKB"/>
</dbReference>
<dbReference type="GO" id="GO:0005525">
    <property type="term" value="F:GTP binding"/>
    <property type="evidence" value="ECO:0007669"/>
    <property type="project" value="UniProtKB-KW"/>
</dbReference>
<dbReference type="GO" id="GO:0140523">
    <property type="term" value="F:GTPase-dependent fusogenic activity"/>
    <property type="evidence" value="ECO:0000250"/>
    <property type="project" value="UniProtKB"/>
</dbReference>
<dbReference type="GO" id="GO:0016320">
    <property type="term" value="P:endoplasmic reticulum membrane fusion"/>
    <property type="evidence" value="ECO:0000250"/>
    <property type="project" value="UniProtKB"/>
</dbReference>
<dbReference type="GO" id="GO:1990809">
    <property type="term" value="P:endoplasmic reticulum tubular network membrane organization"/>
    <property type="evidence" value="ECO:0000250"/>
    <property type="project" value="UniProtKB"/>
</dbReference>
<dbReference type="CDD" id="cd01851">
    <property type="entry name" value="GBP"/>
    <property type="match status" value="1"/>
</dbReference>
<dbReference type="FunFam" id="1.20.58.420:FF:000001">
    <property type="entry name" value="Atlastin-1 isoform 1"/>
    <property type="match status" value="1"/>
</dbReference>
<dbReference type="FunFam" id="3.40.50.300:FF:000314">
    <property type="entry name" value="Atlastin-2 isoform 2"/>
    <property type="match status" value="1"/>
</dbReference>
<dbReference type="Gene3D" id="1.20.58.420">
    <property type="entry name" value="AHSP"/>
    <property type="match status" value="1"/>
</dbReference>
<dbReference type="Gene3D" id="3.40.50.300">
    <property type="entry name" value="P-loop containing nucleotide triphosphate hydrolases"/>
    <property type="match status" value="1"/>
</dbReference>
<dbReference type="InterPro" id="IPR030386">
    <property type="entry name" value="G_GB1_RHD3_dom"/>
</dbReference>
<dbReference type="InterPro" id="IPR003191">
    <property type="entry name" value="Guanylate-bd/ATL_C"/>
</dbReference>
<dbReference type="InterPro" id="IPR036543">
    <property type="entry name" value="Guanylate-bd_C_sf"/>
</dbReference>
<dbReference type="InterPro" id="IPR015894">
    <property type="entry name" value="Guanylate-bd_N"/>
</dbReference>
<dbReference type="InterPro" id="IPR027417">
    <property type="entry name" value="P-loop_NTPase"/>
</dbReference>
<dbReference type="PANTHER" id="PTHR10751">
    <property type="entry name" value="GUANYLATE BINDING PROTEIN"/>
    <property type="match status" value="1"/>
</dbReference>
<dbReference type="Pfam" id="PF02263">
    <property type="entry name" value="GBP"/>
    <property type="match status" value="1"/>
</dbReference>
<dbReference type="Pfam" id="PF02841">
    <property type="entry name" value="GBP_C"/>
    <property type="match status" value="1"/>
</dbReference>
<dbReference type="SUPFAM" id="SSF48340">
    <property type="entry name" value="Interferon-induced guanylate-binding protein 1 (GBP1), C-terminal domain"/>
    <property type="match status" value="1"/>
</dbReference>
<dbReference type="SUPFAM" id="SSF52540">
    <property type="entry name" value="P-loop containing nucleoside triphosphate hydrolases"/>
    <property type="match status" value="1"/>
</dbReference>
<dbReference type="PROSITE" id="PS51715">
    <property type="entry name" value="G_GB1_RHD3"/>
    <property type="match status" value="1"/>
</dbReference>
<sequence length="565" mass="64528">MVLKKGVKFFQRLINSKSLRFGENYEDDDLVNSDEVMKKPCPVQIVLAHEDDHNFELDEEALEQILLQEHIRDLNIVVVSVAGAFRKGKSFLLDFMLRYMYNKDSQSWIGGNNEPLTGFTWRGGCERETTGIQVWNEVFVIDRPNGTKVAVLLMDTQGAFDSQSTIKDCATVFALSTMTSSVQVYNLSQNIQEDDLQHLQLFTEYGRLAMEEIYQKPFQTLMFLIRDWSYPYEHSYGLEGGKQFLEKRLQVKKNQHEELQNVRKHIHNCFSNLGCFLLPHPGLKVATNPSFDGRLKDIDEDFKRELRNLVPLLLAPENLVEKEISGSKVTCRDLVEYFKAYIKIYQGEELPHPKSMLQATAEANNLAAVAGARDTYCKSMEQVCGGDKPYIAPSDLERKHLDLKEVAIKQFRSVKKMGGDEFCRRYQDQLEAEIEETYANFIKHNDGKNIFYAARTPATLFAVMFAMYIISGLTGFIGLNSIAVLCNLVMGLALTFLCTWAYVKYSGEFREIGTMIDQIAETLWEQVLKPLGDNLMEENIRQSVTNSIKAGLTDQVSHHARLKTD</sequence>
<reference key="1">
    <citation type="journal article" date="2002" name="BMC Genomics">
        <title>Cynomolgus monkey testicular cDNAs for discovery of novel human genes in the human genome sequence.</title>
        <authorList>
            <person name="Osada N."/>
            <person name="Hida M."/>
            <person name="Kusuda J."/>
            <person name="Tanuma R."/>
            <person name="Hirata M."/>
            <person name="Suto Y."/>
            <person name="Hirai M."/>
            <person name="Terao K."/>
            <person name="Sugano S."/>
            <person name="Hashimoto K."/>
        </authorList>
    </citation>
    <scope>NUCLEOTIDE SEQUENCE [LARGE SCALE MRNA]</scope>
    <source>
        <tissue>Testis</tissue>
    </source>
</reference>
<organism>
    <name type="scientific">Macaca fascicularis</name>
    <name type="common">Crab-eating macaque</name>
    <name type="synonym">Cynomolgus monkey</name>
    <dbReference type="NCBI Taxonomy" id="9541"/>
    <lineage>
        <taxon>Eukaryota</taxon>
        <taxon>Metazoa</taxon>
        <taxon>Chordata</taxon>
        <taxon>Craniata</taxon>
        <taxon>Vertebrata</taxon>
        <taxon>Euteleostomi</taxon>
        <taxon>Mammalia</taxon>
        <taxon>Eutheria</taxon>
        <taxon>Euarchontoglires</taxon>
        <taxon>Primates</taxon>
        <taxon>Haplorrhini</taxon>
        <taxon>Catarrhini</taxon>
        <taxon>Cercopithecidae</taxon>
        <taxon>Cercopithecinae</taxon>
        <taxon>Macaca</taxon>
    </lineage>
</organism>
<proteinExistence type="evidence at transcript level"/>
<comment type="function">
    <text evidence="1 2">Atlastin-2 (ATL2) is a membrane-anchored GTPase that mediates the GTP-dependent fusion of endoplasmic reticulum (ER) membranes, maintaining the continuous ER network. It facilitates the formation of three-way junctions where ER tubules intersect (By similarity). Two atlastin-2 on neighboring ER tubules bind GTP and form loose homodimers through the GB1/RHD3-type G domains and 3HB regions. Upon GTP hydrolysis, the 3HB regions tighten, pulling the membranes together to drive their fusion. After fusion, the homodimer disassembles upon release of inorganic phosphate (Pi). Subsequently, GDP dissociates, resetting the monomers to a conformation ready for a new fusion cycle (By similarity).</text>
</comment>
<comment type="catalytic activity">
    <reaction evidence="1">
        <text>GTP + H2O = GDP + phosphate + H(+)</text>
        <dbReference type="Rhea" id="RHEA:19669"/>
        <dbReference type="ChEBI" id="CHEBI:15377"/>
        <dbReference type="ChEBI" id="CHEBI:15378"/>
        <dbReference type="ChEBI" id="CHEBI:37565"/>
        <dbReference type="ChEBI" id="CHEBI:43474"/>
        <dbReference type="ChEBI" id="CHEBI:58189"/>
    </reaction>
    <physiologicalReaction direction="left-to-right" evidence="1">
        <dbReference type="Rhea" id="RHEA:19670"/>
    </physiologicalReaction>
</comment>
<comment type="subunit">
    <text evidence="1">Monomeric and homodimeric. The homodimer, transiently formed by two molecules on opposing membranes, is the active form mediating ER membrane fusion. Interacts with REEP5 and RTN3; these proteins are involved in endoplasmic reticulum tubular network organization. Interacts with ZFYVE27; both proteins are involved in endoplasmic reticulum tubular network organization.</text>
</comment>
<comment type="subcellular location">
    <subcellularLocation>
        <location evidence="1">Endoplasmic reticulum membrane</location>
        <topology evidence="1">Multi-pass membrane protein</topology>
    </subcellularLocation>
    <text evidence="1">Localizes at endoplasmic reticulum (ER) three-way tubular junctions.</text>
</comment>
<comment type="domain">
    <text evidence="2">The GB1/RHD3-type G domain mediates GTP-binding and hydrolysis as well as homodimerization.</text>
</comment>
<comment type="domain">
    <text evidence="2">The two three-helix bundle (3HB) regions in the homodimer are loosely associated initially, but they tighten upon GTP hydrolysis, facilitating the fusion of membranes.</text>
</comment>
<comment type="domain">
    <text evidence="1">The C-terminal autoihibitory domain negatively regulates the GTPase-dependent fusogenic activity without affecting GTP-binding.</text>
</comment>
<comment type="similarity">
    <text evidence="4">Belongs to the TRAFAC class dynamin-like GTPase superfamily. GB1/RHD3 GTPase family. GB1 subfamily.</text>
</comment>
<evidence type="ECO:0000250" key="1">
    <source>
        <dbReference type="UniProtKB" id="Q8NHH9"/>
    </source>
</evidence>
<evidence type="ECO:0000250" key="2">
    <source>
        <dbReference type="UniProtKB" id="Q8WXF7"/>
    </source>
</evidence>
<evidence type="ECO:0000255" key="3"/>
<evidence type="ECO:0000255" key="4">
    <source>
        <dbReference type="PROSITE-ProRule" id="PRU01052"/>
    </source>
</evidence>
<evidence type="ECO:0000312" key="5">
    <source>
        <dbReference type="EMBL" id="BAB69724.1"/>
    </source>
</evidence>
<gene>
    <name evidence="1" type="primary">ATL2</name>
    <name evidence="5" type="ORF">QtsA-18427</name>
</gene>